<accession>B0R3M0</accession>
<reference key="1">
    <citation type="journal article" date="2008" name="Genomics">
        <title>Evolution in the laboratory: the genome of Halobacterium salinarum strain R1 compared to that of strain NRC-1.</title>
        <authorList>
            <person name="Pfeiffer F."/>
            <person name="Schuster S.C."/>
            <person name="Broicher A."/>
            <person name="Falb M."/>
            <person name="Palm P."/>
            <person name="Rodewald K."/>
            <person name="Ruepp A."/>
            <person name="Soppa J."/>
            <person name="Tittor J."/>
            <person name="Oesterhelt D."/>
        </authorList>
    </citation>
    <scope>NUCLEOTIDE SEQUENCE [LARGE SCALE GENOMIC DNA]</scope>
    <source>
        <strain>ATCC 29341 / DSM 671 / R1</strain>
    </source>
</reference>
<evidence type="ECO:0000255" key="1">
    <source>
        <dbReference type="HAMAP-Rule" id="MF_00231"/>
    </source>
</evidence>
<gene>
    <name evidence="1" type="primary">eif2a</name>
    <name type="ordered locus">OE_1818R</name>
</gene>
<keyword id="KW-0396">Initiation factor</keyword>
<keyword id="KW-0648">Protein biosynthesis</keyword>
<keyword id="KW-0694">RNA-binding</keyword>
<organism>
    <name type="scientific">Halobacterium salinarum (strain ATCC 29341 / DSM 671 / R1)</name>
    <dbReference type="NCBI Taxonomy" id="478009"/>
    <lineage>
        <taxon>Archaea</taxon>
        <taxon>Methanobacteriati</taxon>
        <taxon>Methanobacteriota</taxon>
        <taxon>Stenosarchaea group</taxon>
        <taxon>Halobacteria</taxon>
        <taxon>Halobacteriales</taxon>
        <taxon>Halobacteriaceae</taxon>
        <taxon>Halobacterium</taxon>
        <taxon>Halobacterium salinarum NRC-34001</taxon>
    </lineage>
</organism>
<comment type="function">
    <text evidence="1">eIF-2 functions in the early steps of protein synthesis by forming a ternary complex with GTP and initiator tRNA.</text>
</comment>
<comment type="subunit">
    <text evidence="1">Heterotrimer composed of an alpha, a beta and a gamma chain.</text>
</comment>
<comment type="similarity">
    <text evidence="1">Belongs to the eIF-2-alpha family.</text>
</comment>
<feature type="chain" id="PRO_1000100484" description="Translation initiation factor 2 subunit alpha">
    <location>
        <begin position="1"/>
        <end position="267"/>
    </location>
</feature>
<feature type="domain" description="S1 motif" evidence="1">
    <location>
        <begin position="10"/>
        <end position="81"/>
    </location>
</feature>
<name>IF2A_HALS3</name>
<sequence length="267" mass="29336">MKYEGWPDEGELVVGKVDDIEDFGVFVDLEQYQDKRGLVHVSEVASGWIKNVRDHVNEDQTVVAKVLGVDESAQQIDLSLKDVNDHQHSDTIQEWKNEQKADKWLTLAFGEDMADDQFRRIANGLLADFGSLYDGFEQAAIHGHEALADTALEDDEIDAIVETARDNVSVPYVTVTGYVSLQSPDGDGVDTIKDALQAAEGNGEVPDEVDLDVTYVGAPEYRLRVQAPNYKTAESALEAAGDRAVDSVTAHDGSGAFHRERQLDDDA</sequence>
<proteinExistence type="inferred from homology"/>
<dbReference type="EMBL" id="AM774415">
    <property type="protein sequence ID" value="CAP13334.1"/>
    <property type="molecule type" value="Genomic_DNA"/>
</dbReference>
<dbReference type="RefSeq" id="WP_010902366.1">
    <property type="nucleotide sequence ID" value="NC_010364.1"/>
</dbReference>
<dbReference type="SMR" id="B0R3M0"/>
<dbReference type="EnsemblBacteria" id="CAP13334">
    <property type="protein sequence ID" value="CAP13334"/>
    <property type="gene ID" value="OE_1818R"/>
</dbReference>
<dbReference type="KEGG" id="hsl:OE_1818R"/>
<dbReference type="HOGENOM" id="CLU_033458_0_2_2"/>
<dbReference type="PhylomeDB" id="B0R3M0"/>
<dbReference type="Proteomes" id="UP000001321">
    <property type="component" value="Chromosome"/>
</dbReference>
<dbReference type="GO" id="GO:0043022">
    <property type="term" value="F:ribosome binding"/>
    <property type="evidence" value="ECO:0007669"/>
    <property type="project" value="TreeGrafter"/>
</dbReference>
<dbReference type="GO" id="GO:0003723">
    <property type="term" value="F:RNA binding"/>
    <property type="evidence" value="ECO:0007669"/>
    <property type="project" value="UniProtKB-UniRule"/>
</dbReference>
<dbReference type="GO" id="GO:0003743">
    <property type="term" value="F:translation initiation factor activity"/>
    <property type="evidence" value="ECO:0007669"/>
    <property type="project" value="UniProtKB-UniRule"/>
</dbReference>
<dbReference type="CDD" id="cd04452">
    <property type="entry name" value="S1_IF2_alpha"/>
    <property type="match status" value="1"/>
</dbReference>
<dbReference type="FunFam" id="1.10.150.190:FF:000006">
    <property type="entry name" value="Translation initiation factor 2 subunit alpha"/>
    <property type="match status" value="1"/>
</dbReference>
<dbReference type="FunFam" id="3.30.70.1130:FF:000002">
    <property type="entry name" value="Translation initiation factor 2 subunit alpha"/>
    <property type="match status" value="1"/>
</dbReference>
<dbReference type="Gene3D" id="3.30.70.1130">
    <property type="entry name" value="EIF_2_alpha"/>
    <property type="match status" value="1"/>
</dbReference>
<dbReference type="Gene3D" id="2.40.50.140">
    <property type="entry name" value="Nucleic acid-binding proteins"/>
    <property type="match status" value="1"/>
</dbReference>
<dbReference type="Gene3D" id="1.10.150.190">
    <property type="entry name" value="Translation initiation factor 2, subunit 1, domain 2"/>
    <property type="match status" value="1"/>
</dbReference>
<dbReference type="HAMAP" id="MF_00231">
    <property type="entry name" value="eIF_2_alpha"/>
    <property type="match status" value="1"/>
</dbReference>
<dbReference type="InterPro" id="IPR012340">
    <property type="entry name" value="NA-bd_OB-fold"/>
</dbReference>
<dbReference type="InterPro" id="IPR003029">
    <property type="entry name" value="S1_domain"/>
</dbReference>
<dbReference type="InterPro" id="IPR044126">
    <property type="entry name" value="S1_IF2_alpha"/>
</dbReference>
<dbReference type="InterPro" id="IPR022964">
    <property type="entry name" value="TIF2_asu_arc"/>
</dbReference>
<dbReference type="InterPro" id="IPR024055">
    <property type="entry name" value="TIF2_asu_C"/>
</dbReference>
<dbReference type="InterPro" id="IPR024054">
    <property type="entry name" value="TIF2_asu_middle_sf"/>
</dbReference>
<dbReference type="InterPro" id="IPR011488">
    <property type="entry name" value="TIF_2_asu"/>
</dbReference>
<dbReference type="NCBIfam" id="NF003064">
    <property type="entry name" value="PRK03987.1-4"/>
    <property type="match status" value="1"/>
</dbReference>
<dbReference type="NCBIfam" id="NF003065">
    <property type="entry name" value="PRK03987.1-5"/>
    <property type="match status" value="1"/>
</dbReference>
<dbReference type="PANTHER" id="PTHR10602">
    <property type="entry name" value="EUKARYOTIC TRANSLATION INITIATION FACTOR 2 SUBUNIT 1"/>
    <property type="match status" value="1"/>
</dbReference>
<dbReference type="PANTHER" id="PTHR10602:SF0">
    <property type="entry name" value="EUKARYOTIC TRANSLATION INITIATION FACTOR 2 SUBUNIT 1"/>
    <property type="match status" value="1"/>
</dbReference>
<dbReference type="Pfam" id="PF07541">
    <property type="entry name" value="EIF_2_alpha"/>
    <property type="match status" value="1"/>
</dbReference>
<dbReference type="Pfam" id="PF00575">
    <property type="entry name" value="S1"/>
    <property type="match status" value="1"/>
</dbReference>
<dbReference type="SMART" id="SM00316">
    <property type="entry name" value="S1"/>
    <property type="match status" value="1"/>
</dbReference>
<dbReference type="SUPFAM" id="SSF110993">
    <property type="entry name" value="eIF-2-alpha, C-terminal domain"/>
    <property type="match status" value="1"/>
</dbReference>
<dbReference type="SUPFAM" id="SSF116742">
    <property type="entry name" value="eIF2alpha middle domain-like"/>
    <property type="match status" value="1"/>
</dbReference>
<dbReference type="SUPFAM" id="SSF50249">
    <property type="entry name" value="Nucleic acid-binding proteins"/>
    <property type="match status" value="1"/>
</dbReference>
<dbReference type="PROSITE" id="PS50126">
    <property type="entry name" value="S1"/>
    <property type="match status" value="1"/>
</dbReference>
<protein>
    <recommendedName>
        <fullName evidence="1">Translation initiation factor 2 subunit alpha</fullName>
    </recommendedName>
    <alternativeName>
        <fullName evidence="1">aIF2-alpha</fullName>
    </alternativeName>
    <alternativeName>
        <fullName evidence="1">eIF-2-alpha</fullName>
    </alternativeName>
</protein>